<evidence type="ECO:0000250" key="1">
    <source>
        <dbReference type="UniProtKB" id="P37128"/>
    </source>
</evidence>
<evidence type="ECO:0000255" key="2">
    <source>
        <dbReference type="PROSITE-ProRule" id="PRU00794"/>
    </source>
</evidence>
<evidence type="ECO:0000305" key="3"/>
<organism>
    <name type="scientific">Shigella dysenteriae serotype 1 (strain Sd197)</name>
    <dbReference type="NCBI Taxonomy" id="300267"/>
    <lineage>
        <taxon>Bacteria</taxon>
        <taxon>Pseudomonadati</taxon>
        <taxon>Pseudomonadota</taxon>
        <taxon>Gammaproteobacteria</taxon>
        <taxon>Enterobacterales</taxon>
        <taxon>Enterobacteriaceae</taxon>
        <taxon>Shigella</taxon>
    </lineage>
</organism>
<sequence length="191" mass="21745">MTQQITLIKDKILSDNYFTLHNITYDLTRKDGEVIRHKREVYDRGNGATILLYNAKKKTVVLIRQFRVATWVNGNESGQLIETCAGLLDNDEPEVCIRKEAIEETGYEVGEVRKLFELYMSPGGVTELIHFFIAEYSDNQRANAGGGVEDEDIEVLELPFSQALEMIKTGEIRDGKTVLLLNYLQMSHLID</sequence>
<protein>
    <recommendedName>
        <fullName>GDP-mannose pyrophosphatase</fullName>
        <ecNumber evidence="1">3.6.1.-</ecNumber>
    </recommendedName>
    <alternativeName>
        <fullName>GDP-mannose hydrolase</fullName>
    </alternativeName>
    <alternativeName>
        <fullName>GDPMK</fullName>
    </alternativeName>
</protein>
<accession>Q32DA4</accession>
<dbReference type="EC" id="3.6.1.-" evidence="1"/>
<dbReference type="EMBL" id="CP000034">
    <property type="protein sequence ID" value="ABB62701.1"/>
    <property type="molecule type" value="Genomic_DNA"/>
</dbReference>
<dbReference type="RefSeq" id="WP_001301627.1">
    <property type="nucleotide sequence ID" value="NC_007606.1"/>
</dbReference>
<dbReference type="RefSeq" id="YP_404192.1">
    <property type="nucleotide sequence ID" value="NC_007606.1"/>
</dbReference>
<dbReference type="SMR" id="Q32DA4"/>
<dbReference type="STRING" id="300267.SDY_2650"/>
<dbReference type="EnsemblBacteria" id="ABB62701">
    <property type="protein sequence ID" value="ABB62701"/>
    <property type="gene ID" value="SDY_2650"/>
</dbReference>
<dbReference type="KEGG" id="sdy:SDY_2650"/>
<dbReference type="PATRIC" id="fig|300267.13.peg.3196"/>
<dbReference type="HOGENOM" id="CLU_062658_6_0_6"/>
<dbReference type="Proteomes" id="UP000002716">
    <property type="component" value="Chromosome"/>
</dbReference>
<dbReference type="GO" id="GO:0005829">
    <property type="term" value="C:cytosol"/>
    <property type="evidence" value="ECO:0007669"/>
    <property type="project" value="TreeGrafter"/>
</dbReference>
<dbReference type="GO" id="GO:0016818">
    <property type="term" value="F:hydrolase activity, acting on acid anhydrides, in phosphorus-containing anhydrides"/>
    <property type="evidence" value="ECO:0007669"/>
    <property type="project" value="InterPro"/>
</dbReference>
<dbReference type="GO" id="GO:0046872">
    <property type="term" value="F:metal ion binding"/>
    <property type="evidence" value="ECO:0007669"/>
    <property type="project" value="UniProtKB-KW"/>
</dbReference>
<dbReference type="GO" id="GO:0006753">
    <property type="term" value="P:nucleoside phosphate metabolic process"/>
    <property type="evidence" value="ECO:0007669"/>
    <property type="project" value="TreeGrafter"/>
</dbReference>
<dbReference type="GO" id="GO:0019693">
    <property type="term" value="P:ribose phosphate metabolic process"/>
    <property type="evidence" value="ECO:0007669"/>
    <property type="project" value="TreeGrafter"/>
</dbReference>
<dbReference type="CDD" id="cd24157">
    <property type="entry name" value="NUDIX_GDPMK"/>
    <property type="match status" value="1"/>
</dbReference>
<dbReference type="FunFam" id="3.90.79.10:FF:000010">
    <property type="entry name" value="GDP-mannose pyrophosphatase NudK"/>
    <property type="match status" value="1"/>
</dbReference>
<dbReference type="Gene3D" id="3.90.79.10">
    <property type="entry name" value="Nucleoside Triphosphate Pyrophosphohydrolase"/>
    <property type="match status" value="1"/>
</dbReference>
<dbReference type="InterPro" id="IPR004385">
    <property type="entry name" value="NDP_pyrophosphatase"/>
</dbReference>
<dbReference type="InterPro" id="IPR015797">
    <property type="entry name" value="NUDIX_hydrolase-like_dom_sf"/>
</dbReference>
<dbReference type="InterPro" id="IPR000086">
    <property type="entry name" value="NUDIX_hydrolase_dom"/>
</dbReference>
<dbReference type="NCBIfam" id="TIGR00052">
    <property type="entry name" value="nudix-type nucleoside diphosphatase, YffH/AdpP family"/>
    <property type="match status" value="1"/>
</dbReference>
<dbReference type="NCBIfam" id="NF011585">
    <property type="entry name" value="PRK15009.1"/>
    <property type="match status" value="1"/>
</dbReference>
<dbReference type="PANTHER" id="PTHR11839:SF18">
    <property type="entry name" value="NUDIX HYDROLASE DOMAIN-CONTAINING PROTEIN"/>
    <property type="match status" value="1"/>
</dbReference>
<dbReference type="PANTHER" id="PTHR11839">
    <property type="entry name" value="UDP/ADP-SUGAR PYROPHOSPHATASE"/>
    <property type="match status" value="1"/>
</dbReference>
<dbReference type="Pfam" id="PF00293">
    <property type="entry name" value="NUDIX"/>
    <property type="match status" value="1"/>
</dbReference>
<dbReference type="SUPFAM" id="SSF55811">
    <property type="entry name" value="Nudix"/>
    <property type="match status" value="1"/>
</dbReference>
<dbReference type="PROSITE" id="PS51462">
    <property type="entry name" value="NUDIX"/>
    <property type="match status" value="1"/>
</dbReference>
<name>NUDK_SHIDS</name>
<comment type="function">
    <text evidence="1">Nucleoside diphosphate sugar hydrolase that hydrolyzes GDP-mannose as its preferred substrate, yielding GMP and mannose-1-phosphate.</text>
</comment>
<comment type="catalytic activity">
    <reaction evidence="1">
        <text>GDP-alpha-D-mannose + H2O = alpha-D-mannose 1-phosphate + GMP + 2 H(+)</text>
        <dbReference type="Rhea" id="RHEA:27978"/>
        <dbReference type="ChEBI" id="CHEBI:15377"/>
        <dbReference type="ChEBI" id="CHEBI:15378"/>
        <dbReference type="ChEBI" id="CHEBI:57527"/>
        <dbReference type="ChEBI" id="CHEBI:58115"/>
        <dbReference type="ChEBI" id="CHEBI:58409"/>
    </reaction>
</comment>
<comment type="cofactor">
    <cofactor evidence="1">
        <name>Mg(2+)</name>
        <dbReference type="ChEBI" id="CHEBI:18420"/>
    </cofactor>
</comment>
<comment type="subunit">
    <text evidence="1">Homodimer.</text>
</comment>
<comment type="domain">
    <text evidence="1">In the dimer, the N-terminal domains are swapped between the two monomers, such that residues of both chains contribute to the active site.</text>
</comment>
<comment type="similarity">
    <text evidence="3">Belongs to the Nudix hydrolase family. NudK subfamily.</text>
</comment>
<gene>
    <name type="primary">nudK</name>
    <name type="ordered locus">SDY_2650</name>
</gene>
<keyword id="KW-0378">Hydrolase</keyword>
<keyword id="KW-0460">Magnesium</keyword>
<keyword id="KW-0479">Metal-binding</keyword>
<keyword id="KW-1185">Reference proteome</keyword>
<reference key="1">
    <citation type="journal article" date="2005" name="Nucleic Acids Res.">
        <title>Genome dynamics and diversity of Shigella species, the etiologic agents of bacillary dysentery.</title>
        <authorList>
            <person name="Yang F."/>
            <person name="Yang J."/>
            <person name="Zhang X."/>
            <person name="Chen L."/>
            <person name="Jiang Y."/>
            <person name="Yan Y."/>
            <person name="Tang X."/>
            <person name="Wang J."/>
            <person name="Xiong Z."/>
            <person name="Dong J."/>
            <person name="Xue Y."/>
            <person name="Zhu Y."/>
            <person name="Xu X."/>
            <person name="Sun L."/>
            <person name="Chen S."/>
            <person name="Nie H."/>
            <person name="Peng J."/>
            <person name="Xu J."/>
            <person name="Wang Y."/>
            <person name="Yuan Z."/>
            <person name="Wen Y."/>
            <person name="Yao Z."/>
            <person name="Shen Y."/>
            <person name="Qiang B."/>
            <person name="Hou Y."/>
            <person name="Yu J."/>
            <person name="Jin Q."/>
        </authorList>
    </citation>
    <scope>NUCLEOTIDE SEQUENCE [LARGE SCALE GENOMIC DNA]</scope>
    <source>
        <strain>Sd197</strain>
    </source>
</reference>
<feature type="chain" id="PRO_0000342501" description="GDP-mannose pyrophosphatase">
    <location>
        <begin position="1"/>
        <end position="191"/>
    </location>
</feature>
<feature type="domain" description="Nudix hydrolase" evidence="2">
    <location>
        <begin position="43"/>
        <end position="180"/>
    </location>
</feature>
<feature type="short sequence motif" description="Nudix box">
    <location>
        <begin position="86"/>
        <end position="106"/>
    </location>
</feature>
<feature type="binding site" description="in other chain" evidence="1">
    <location>
        <position position="17"/>
    </location>
    <ligand>
        <name>GDP-alpha-D-mannose</name>
        <dbReference type="ChEBI" id="CHEBI:57527"/>
        <note>ligand shared between dimeric partners</note>
    </ligand>
</feature>
<feature type="binding site" evidence="1">
    <location>
        <begin position="38"/>
        <end position="40"/>
    </location>
    <ligand>
        <name>GDP-alpha-D-mannose</name>
        <dbReference type="ChEBI" id="CHEBI:57527"/>
        <note>ligand shared between dimeric partners</note>
    </ligand>
</feature>
<feature type="binding site" description="in other chain" evidence="1">
    <location>
        <position position="67"/>
    </location>
    <ligand>
        <name>GDP-alpha-D-mannose</name>
        <dbReference type="ChEBI" id="CHEBI:57527"/>
        <note>ligand shared between dimeric partners</note>
    </ligand>
</feature>
<feature type="binding site" description="in other chain" evidence="1">
    <location>
        <begin position="85"/>
        <end position="87"/>
    </location>
    <ligand>
        <name>GDP-alpha-D-mannose</name>
        <dbReference type="ChEBI" id="CHEBI:57527"/>
        <note>ligand shared between dimeric partners</note>
    </ligand>
</feature>
<feature type="binding site" evidence="1">
    <location>
        <position position="85"/>
    </location>
    <ligand>
        <name>Mg(2+)</name>
        <dbReference type="ChEBI" id="CHEBI:18420"/>
        <label>1</label>
    </ligand>
</feature>
<feature type="binding site" evidence="1">
    <location>
        <position position="100"/>
    </location>
    <ligand>
        <name>Mg(2+)</name>
        <dbReference type="ChEBI" id="CHEBI:18420"/>
        <label>2</label>
    </ligand>
</feature>
<feature type="binding site" description="in other chain" evidence="1">
    <location>
        <position position="104"/>
    </location>
    <ligand>
        <name>GDP-alpha-D-mannose</name>
        <dbReference type="ChEBI" id="CHEBI:57527"/>
        <note>ligand shared between dimeric partners</note>
    </ligand>
</feature>
<feature type="binding site" evidence="1">
    <location>
        <position position="104"/>
    </location>
    <ligand>
        <name>Mg(2+)</name>
        <dbReference type="ChEBI" id="CHEBI:18420"/>
        <label>1</label>
    </ligand>
</feature>
<feature type="binding site" evidence="1">
    <location>
        <position position="104"/>
    </location>
    <ligand>
        <name>Mg(2+)</name>
        <dbReference type="ChEBI" id="CHEBI:18420"/>
        <label>2</label>
    </ligand>
</feature>
<feature type="binding site" description="in other chain" evidence="1">
    <location>
        <position position="127"/>
    </location>
    <ligand>
        <name>GDP-alpha-D-mannose</name>
        <dbReference type="ChEBI" id="CHEBI:57527"/>
        <note>ligand shared between dimeric partners</note>
    </ligand>
</feature>
<feature type="binding site" description="in other chain" evidence="1">
    <location>
        <begin position="150"/>
        <end position="151"/>
    </location>
    <ligand>
        <name>GDP-alpha-D-mannose</name>
        <dbReference type="ChEBI" id="CHEBI:57527"/>
        <note>ligand shared between dimeric partners</note>
    </ligand>
</feature>
<feature type="binding site" evidence="1">
    <location>
        <position position="151"/>
    </location>
    <ligand>
        <name>Mg(2+)</name>
        <dbReference type="ChEBI" id="CHEBI:18420"/>
        <label>2</label>
    </ligand>
</feature>
<feature type="binding site" description="in other chain" evidence="1">
    <location>
        <position position="176"/>
    </location>
    <ligand>
        <name>GDP-alpha-D-mannose</name>
        <dbReference type="ChEBI" id="CHEBI:57527"/>
        <note>ligand shared between dimeric partners</note>
    </ligand>
</feature>
<proteinExistence type="inferred from homology"/>